<name>ENKD1_HUMAN</name>
<gene>
    <name type="primary">ENKD1</name>
    <name type="synonym">C16orf48</name>
    <name type="ORF">UNQ6410/PRO21183</name>
</gene>
<keyword id="KW-0025">Alternative splicing</keyword>
<keyword id="KW-0966">Cell projection</keyword>
<keyword id="KW-0970">Cilium biogenesis/degradation</keyword>
<keyword id="KW-0963">Cytoplasm</keyword>
<keyword id="KW-0206">Cytoskeleton</keyword>
<keyword id="KW-0493">Microtubule</keyword>
<keyword id="KW-0597">Phosphoprotein</keyword>
<keyword id="KW-1267">Proteomics identification</keyword>
<keyword id="KW-1185">Reference proteome</keyword>
<protein>
    <recommendedName>
        <fullName>Enkurin domain-containing protein 1</fullName>
    </recommendedName>
</protein>
<accession>Q9H0I2</accession>
<accession>Q6UWD7</accession>
<proteinExistence type="evidence at protein level"/>
<organism>
    <name type="scientific">Homo sapiens</name>
    <name type="common">Human</name>
    <dbReference type="NCBI Taxonomy" id="9606"/>
    <lineage>
        <taxon>Eukaryota</taxon>
        <taxon>Metazoa</taxon>
        <taxon>Chordata</taxon>
        <taxon>Craniata</taxon>
        <taxon>Vertebrata</taxon>
        <taxon>Euteleostomi</taxon>
        <taxon>Mammalia</taxon>
        <taxon>Eutheria</taxon>
        <taxon>Euarchontoglires</taxon>
        <taxon>Primates</taxon>
        <taxon>Haplorrhini</taxon>
        <taxon>Catarrhini</taxon>
        <taxon>Hominidae</taxon>
        <taxon>Homo</taxon>
    </lineage>
</organism>
<reference key="1">
    <citation type="journal article" date="2001" name="Genome Res.">
        <title>Towards a catalog of human genes and proteins: sequencing and analysis of 500 novel complete protein coding human cDNAs.</title>
        <authorList>
            <person name="Wiemann S."/>
            <person name="Weil B."/>
            <person name="Wellenreuther R."/>
            <person name="Gassenhuber J."/>
            <person name="Glassl S."/>
            <person name="Ansorge W."/>
            <person name="Boecher M."/>
            <person name="Bloecker H."/>
            <person name="Bauersachs S."/>
            <person name="Blum H."/>
            <person name="Lauber J."/>
            <person name="Duesterhoeft A."/>
            <person name="Beyer A."/>
            <person name="Koehrer K."/>
            <person name="Strack N."/>
            <person name="Mewes H.-W."/>
            <person name="Ottenwaelder B."/>
            <person name="Obermaier B."/>
            <person name="Tampe J."/>
            <person name="Heubner D."/>
            <person name="Wambutt R."/>
            <person name="Korn B."/>
            <person name="Klein M."/>
            <person name="Poustka A."/>
        </authorList>
    </citation>
    <scope>NUCLEOTIDE SEQUENCE [LARGE SCALE MRNA] (ISOFORM 1)</scope>
</reference>
<reference key="2">
    <citation type="journal article" date="2003" name="Genome Res.">
        <title>The secreted protein discovery initiative (SPDI), a large-scale effort to identify novel human secreted and transmembrane proteins: a bioinformatics assessment.</title>
        <authorList>
            <person name="Clark H.F."/>
            <person name="Gurney A.L."/>
            <person name="Abaya E."/>
            <person name="Baker K."/>
            <person name="Baldwin D.T."/>
            <person name="Brush J."/>
            <person name="Chen J."/>
            <person name="Chow B."/>
            <person name="Chui C."/>
            <person name="Crowley C."/>
            <person name="Currell B."/>
            <person name="Deuel B."/>
            <person name="Dowd P."/>
            <person name="Eaton D."/>
            <person name="Foster J.S."/>
            <person name="Grimaldi C."/>
            <person name="Gu Q."/>
            <person name="Hass P.E."/>
            <person name="Heldens S."/>
            <person name="Huang A."/>
            <person name="Kim H.S."/>
            <person name="Klimowski L."/>
            <person name="Jin Y."/>
            <person name="Johnson S."/>
            <person name="Lee J."/>
            <person name="Lewis L."/>
            <person name="Liao D."/>
            <person name="Mark M.R."/>
            <person name="Robbie E."/>
            <person name="Sanchez C."/>
            <person name="Schoenfeld J."/>
            <person name="Seshagiri S."/>
            <person name="Simmons L."/>
            <person name="Singh J."/>
            <person name="Smith V."/>
            <person name="Stinson J."/>
            <person name="Vagts A."/>
            <person name="Vandlen R.L."/>
            <person name="Watanabe C."/>
            <person name="Wieand D."/>
            <person name="Woods K."/>
            <person name="Xie M.-H."/>
            <person name="Yansura D.G."/>
            <person name="Yi S."/>
            <person name="Yu G."/>
            <person name="Yuan J."/>
            <person name="Zhang M."/>
            <person name="Zhang Z."/>
            <person name="Goddard A.D."/>
            <person name="Wood W.I."/>
            <person name="Godowski P.J."/>
            <person name="Gray A.M."/>
        </authorList>
    </citation>
    <scope>NUCLEOTIDE SEQUENCE [LARGE SCALE MRNA] (ISOFORM 2)</scope>
</reference>
<reference key="3">
    <citation type="journal article" date="2004" name="Genome Res.">
        <title>The status, quality, and expansion of the NIH full-length cDNA project: the Mammalian Gene Collection (MGC).</title>
        <authorList>
            <consortium name="The MGC Project Team"/>
        </authorList>
    </citation>
    <scope>NUCLEOTIDE SEQUENCE [LARGE SCALE MRNA] (ISOFORM 1)</scope>
    <source>
        <tissue>Placenta</tissue>
    </source>
</reference>
<reference key="4">
    <citation type="journal article" date="2013" name="J. Proteome Res.">
        <title>Toward a comprehensive characterization of a human cancer cell phosphoproteome.</title>
        <authorList>
            <person name="Zhou H."/>
            <person name="Di Palma S."/>
            <person name="Preisinger C."/>
            <person name="Peng M."/>
            <person name="Polat A.N."/>
            <person name="Heck A.J."/>
            <person name="Mohammed S."/>
        </authorList>
    </citation>
    <scope>PHOSPHORYLATION [LARGE SCALE ANALYSIS] AT SER-91 AND SER-136</scope>
    <scope>IDENTIFICATION BY MASS SPECTROMETRY [LARGE SCALE ANALYSIS]</scope>
    <source>
        <tissue>Cervix carcinoma</tissue>
        <tissue>Erythroleukemia</tissue>
    </source>
</reference>
<reference key="5">
    <citation type="journal article" date="2022" name="Cell Death Differ.">
        <title>ENKD1 promotes epidermal stratification by regulating spindle orientation in basal keratinocytes.</title>
        <authorList>
            <person name="Zhong T."/>
            <person name="Wu X."/>
            <person name="Xie W."/>
            <person name="Luo X."/>
            <person name="Song T."/>
            <person name="Sun S."/>
            <person name="Luo Y."/>
            <person name="Li D."/>
            <person name="Liu M."/>
            <person name="Xie S."/>
            <person name="Zhou J."/>
        </authorList>
    </citation>
    <scope>FUNCTION</scope>
    <scope>INTERACTION WITH ALPHA-TUBULIN</scope>
    <scope>DEVELOPMENTAL STAGE</scope>
</reference>
<reference key="6">
    <citation type="journal article" date="2022" name="EMBO Rep.">
        <title>ENKD1 promotes CP110 removal through competing with CEP97 to initiate ciliogenesis.</title>
        <authorList>
            <person name="Song T."/>
            <person name="Yang Y."/>
            <person name="Zhou P."/>
            <person name="Ran J."/>
            <person name="Zhang L."/>
            <person name="Wu X."/>
            <person name="Xie W."/>
            <person name="Zhong T."/>
            <person name="Liu H."/>
            <person name="Liu M."/>
            <person name="Li D."/>
            <person name="Zhao H."/>
            <person name="Zhou J."/>
        </authorList>
    </citation>
    <scope>FUNCTION</scope>
    <scope>SUBCELLULAR LOCATION</scope>
</reference>
<reference key="7">
    <citation type="journal article" date="2022" name="FEBS J.">
        <title>ENKD1 is a centrosomal and ciliary microtubule-associated protein important for primary cilium content regulation.</title>
        <authorList>
            <person name="Tiryaki F."/>
            <person name="Deretic J."/>
            <person name="Firat-Karalar E.N."/>
        </authorList>
    </citation>
    <scope>FUNCTION</scope>
    <scope>SUBCELLULAR LOCATION</scope>
</reference>
<evidence type="ECO:0000250" key="1">
    <source>
        <dbReference type="UniProtKB" id="Q7TSV9"/>
    </source>
</evidence>
<evidence type="ECO:0000255" key="2">
    <source>
        <dbReference type="PROSITE-ProRule" id="PRU01000"/>
    </source>
</evidence>
<evidence type="ECO:0000256" key="3">
    <source>
        <dbReference type="SAM" id="MobiDB-lite"/>
    </source>
</evidence>
<evidence type="ECO:0000269" key="4">
    <source>
    </source>
</evidence>
<evidence type="ECO:0000269" key="5">
    <source>
    </source>
</evidence>
<evidence type="ECO:0000269" key="6">
    <source>
    </source>
</evidence>
<evidence type="ECO:0000303" key="7">
    <source>
    </source>
</evidence>
<evidence type="ECO:0007744" key="8">
    <source>
    </source>
</evidence>
<dbReference type="EMBL" id="AL136786">
    <property type="protein sequence ID" value="CAB66720.1"/>
    <property type="molecule type" value="mRNA"/>
</dbReference>
<dbReference type="EMBL" id="AY358834">
    <property type="protein sequence ID" value="AAQ89193.1"/>
    <property type="molecule type" value="mRNA"/>
</dbReference>
<dbReference type="EMBL" id="BC008284">
    <property type="protein sequence ID" value="AAH08284.1"/>
    <property type="molecule type" value="mRNA"/>
</dbReference>
<dbReference type="CCDS" id="CCDS10844.1">
    <molecule id="Q9H0I2-1"/>
</dbReference>
<dbReference type="RefSeq" id="NP_115516.1">
    <molecule id="Q9H0I2-1"/>
    <property type="nucleotide sequence ID" value="NM_032140.3"/>
</dbReference>
<dbReference type="SMR" id="Q9H0I2"/>
<dbReference type="BioGRID" id="123875">
    <property type="interactions" value="225"/>
</dbReference>
<dbReference type="FunCoup" id="Q9H0I2">
    <property type="interactions" value="289"/>
</dbReference>
<dbReference type="IntAct" id="Q9H0I2">
    <property type="interactions" value="229"/>
</dbReference>
<dbReference type="MINT" id="Q9H0I2"/>
<dbReference type="STRING" id="9606.ENSP00000243878"/>
<dbReference type="GlyGen" id="Q9H0I2">
    <property type="glycosylation" value="1 site"/>
</dbReference>
<dbReference type="iPTMnet" id="Q9H0I2"/>
<dbReference type="PhosphoSitePlus" id="Q9H0I2"/>
<dbReference type="BioMuta" id="ENKD1"/>
<dbReference type="DMDM" id="74752565"/>
<dbReference type="jPOST" id="Q9H0I2"/>
<dbReference type="MassIVE" id="Q9H0I2"/>
<dbReference type="PaxDb" id="9606-ENSP00000243878"/>
<dbReference type="PeptideAtlas" id="Q9H0I2"/>
<dbReference type="ProteomicsDB" id="80281">
    <molecule id="Q9H0I2-1"/>
</dbReference>
<dbReference type="ProteomicsDB" id="80282">
    <molecule id="Q9H0I2-2"/>
</dbReference>
<dbReference type="Pumba" id="Q9H0I2"/>
<dbReference type="Antibodypedia" id="29606">
    <property type="antibodies" value="121 antibodies from 17 providers"/>
</dbReference>
<dbReference type="DNASU" id="84080"/>
<dbReference type="Ensembl" id="ENST00000243878.9">
    <molecule id="Q9H0I2-1"/>
    <property type="protein sequence ID" value="ENSP00000243878.4"/>
    <property type="gene ID" value="ENSG00000124074.12"/>
</dbReference>
<dbReference type="GeneID" id="84080"/>
<dbReference type="KEGG" id="hsa:84080"/>
<dbReference type="MANE-Select" id="ENST00000243878.9">
    <property type="protein sequence ID" value="ENSP00000243878.4"/>
    <property type="RefSeq nucleotide sequence ID" value="NM_032140.3"/>
    <property type="RefSeq protein sequence ID" value="NP_115516.1"/>
</dbReference>
<dbReference type="UCSC" id="uc002etw.2">
    <molecule id="Q9H0I2-1"/>
    <property type="organism name" value="human"/>
</dbReference>
<dbReference type="AGR" id="HGNC:25246"/>
<dbReference type="CTD" id="84080"/>
<dbReference type="DisGeNET" id="84080"/>
<dbReference type="GeneCards" id="ENKD1"/>
<dbReference type="HGNC" id="HGNC:25246">
    <property type="gene designation" value="ENKD1"/>
</dbReference>
<dbReference type="HPA" id="ENSG00000124074">
    <property type="expression patterns" value="Low tissue specificity"/>
</dbReference>
<dbReference type="neXtProt" id="NX_Q9H0I2"/>
<dbReference type="OpenTargets" id="ENSG00000124074"/>
<dbReference type="PharmGKB" id="PA142672256"/>
<dbReference type="VEuPathDB" id="HostDB:ENSG00000124074"/>
<dbReference type="eggNOG" id="ENOG502QU1P">
    <property type="taxonomic scope" value="Eukaryota"/>
</dbReference>
<dbReference type="GeneTree" id="ENSGT00940000153866"/>
<dbReference type="HOGENOM" id="CLU_068901_0_0_1"/>
<dbReference type="InParanoid" id="Q9H0I2"/>
<dbReference type="OMA" id="DHWRKEA"/>
<dbReference type="OrthoDB" id="10264920at2759"/>
<dbReference type="PAN-GO" id="Q9H0I2">
    <property type="GO annotations" value="1 GO annotation based on evolutionary models"/>
</dbReference>
<dbReference type="PhylomeDB" id="Q9H0I2"/>
<dbReference type="TreeFam" id="TF328494"/>
<dbReference type="PathwayCommons" id="Q9H0I2"/>
<dbReference type="SignaLink" id="Q9H0I2"/>
<dbReference type="BioGRID-ORCS" id="84080">
    <property type="hits" value="29 hits in 1155 CRISPR screens"/>
</dbReference>
<dbReference type="ChiTaRS" id="ENKD1">
    <property type="organism name" value="human"/>
</dbReference>
<dbReference type="GeneWiki" id="C16orf48"/>
<dbReference type="GenomeRNAi" id="84080"/>
<dbReference type="Pharos" id="Q9H0I2">
    <property type="development level" value="Tdark"/>
</dbReference>
<dbReference type="PRO" id="PR:Q9H0I2"/>
<dbReference type="Proteomes" id="UP000005640">
    <property type="component" value="Chromosome 16"/>
</dbReference>
<dbReference type="RNAct" id="Q9H0I2">
    <property type="molecule type" value="protein"/>
</dbReference>
<dbReference type="Bgee" id="ENSG00000124074">
    <property type="expression patterns" value="Expressed in body of pancreas and 157 other cell types or tissues"/>
</dbReference>
<dbReference type="ExpressionAtlas" id="Q9H0I2">
    <property type="expression patterns" value="baseline and differential"/>
</dbReference>
<dbReference type="GO" id="GO:0097731">
    <property type="term" value="C:9+0 non-motile cilium"/>
    <property type="evidence" value="ECO:0007669"/>
    <property type="project" value="Ensembl"/>
</dbReference>
<dbReference type="GO" id="GO:0005814">
    <property type="term" value="C:centriole"/>
    <property type="evidence" value="ECO:0000314"/>
    <property type="project" value="UniProtKB"/>
</dbReference>
<dbReference type="GO" id="GO:0005813">
    <property type="term" value="C:centrosome"/>
    <property type="evidence" value="ECO:0000314"/>
    <property type="project" value="HPA"/>
</dbReference>
<dbReference type="GO" id="GO:0036064">
    <property type="term" value="C:ciliary basal body"/>
    <property type="evidence" value="ECO:0000314"/>
    <property type="project" value="HPA"/>
</dbReference>
<dbReference type="GO" id="GO:0097546">
    <property type="term" value="C:ciliary base"/>
    <property type="evidence" value="ECO:0007669"/>
    <property type="project" value="Ensembl"/>
</dbReference>
<dbReference type="GO" id="GO:0005929">
    <property type="term" value="C:cilium"/>
    <property type="evidence" value="ECO:0000314"/>
    <property type="project" value="HPA"/>
</dbReference>
<dbReference type="GO" id="GO:0005881">
    <property type="term" value="C:cytoplasmic microtubule"/>
    <property type="evidence" value="ECO:0000314"/>
    <property type="project" value="UniProtKB"/>
</dbReference>
<dbReference type="GO" id="GO:0015630">
    <property type="term" value="C:microtubule cytoskeleton"/>
    <property type="evidence" value="ECO:0000314"/>
    <property type="project" value="LIFEdb"/>
</dbReference>
<dbReference type="GO" id="GO:0005886">
    <property type="term" value="C:plasma membrane"/>
    <property type="evidence" value="ECO:0000314"/>
    <property type="project" value="HPA"/>
</dbReference>
<dbReference type="GO" id="GO:0000922">
    <property type="term" value="C:spindle pole"/>
    <property type="evidence" value="ECO:0007669"/>
    <property type="project" value="UniProtKB-SubCell"/>
</dbReference>
<dbReference type="GO" id="GO:0043014">
    <property type="term" value="F:alpha-tubulin binding"/>
    <property type="evidence" value="ECO:0000314"/>
    <property type="project" value="UniProtKB"/>
</dbReference>
<dbReference type="GO" id="GO:0008017">
    <property type="term" value="F:microtubule binding"/>
    <property type="evidence" value="ECO:0000314"/>
    <property type="project" value="UniProtKB"/>
</dbReference>
<dbReference type="GO" id="GO:0000132">
    <property type="term" value="P:establishment of mitotic spindle orientation"/>
    <property type="evidence" value="ECO:0000315"/>
    <property type="project" value="UniProtKB"/>
</dbReference>
<dbReference type="GO" id="GO:0044458">
    <property type="term" value="P:motile cilium assembly"/>
    <property type="evidence" value="ECO:0000250"/>
    <property type="project" value="UniProtKB"/>
</dbReference>
<dbReference type="GO" id="GO:1905515">
    <property type="term" value="P:non-motile cilium assembly"/>
    <property type="evidence" value="ECO:0000315"/>
    <property type="project" value="UniProtKB"/>
</dbReference>
<dbReference type="InterPro" id="IPR027012">
    <property type="entry name" value="Enkurin_dom"/>
</dbReference>
<dbReference type="InterPro" id="IPR052102">
    <property type="entry name" value="Enkurin_domain-protein"/>
</dbReference>
<dbReference type="PANTHER" id="PTHR21490:SF2">
    <property type="entry name" value="ENKURIN DOMAIN-CONTAINING PROTEIN 1"/>
    <property type="match status" value="1"/>
</dbReference>
<dbReference type="PANTHER" id="PTHR21490">
    <property type="entry name" value="ENKURIN-RELATED"/>
    <property type="match status" value="1"/>
</dbReference>
<dbReference type="Pfam" id="PF13864">
    <property type="entry name" value="Enkurin"/>
    <property type="match status" value="1"/>
</dbReference>
<dbReference type="PROSITE" id="PS51665">
    <property type="entry name" value="ENKURIN"/>
    <property type="match status" value="1"/>
</dbReference>
<comment type="function">
    <text evidence="1 4 5 6">Microtubule-binding protein which regulates microtubule organization and stability (PubMed:35072334, PubMed:35197565). Promotes the stability of astral microtubules and facilitates the proper orientation of the mitotic spindle (PubMed:35197565). This allows the oriented division of basal keratinocytes and contributes to epidermal stratification (By similarity). Required for the assembly of both primary and motile cilia (PubMed:35301795). Destabilizes the interaction between CCP110 and CEP97 by competing with CEP97 for binding to CCP110 which promotes the removal of CCP110 and CEP97 from the mother centriole and allows the initiation of ciliogenesis (PubMed:35301795).</text>
</comment>
<comment type="subunit">
    <text evidence="1 5">Interacts with alpha-tubulin (PubMed:35197565). Interacts (via central region) with CCP110 (via N-terminal region); competes with CEP97 for binding to CCP110 (By similarity).</text>
</comment>
<comment type="interaction">
    <interactant intactId="EBI-744099">
        <id>Q9H0I2</id>
    </interactant>
    <interactant intactId="EBI-11743294">
        <id>Q8IZP0-5</id>
        <label>ABI1</label>
    </interactant>
    <organismsDiffer>false</organismsDiffer>
    <experiments>3</experiments>
</comment>
<comment type="interaction">
    <interactant intactId="EBI-744099">
        <id>Q9H0I2</id>
    </interactant>
    <interactant intactId="EBI-11096309">
        <id>Q9NYB9-2</id>
        <label>ABI2</label>
    </interactant>
    <organismsDiffer>false</organismsDiffer>
    <experiments>6</experiments>
</comment>
<comment type="interaction">
    <interactant intactId="EBI-744099">
        <id>Q9H0I2</id>
    </interactant>
    <interactant intactId="EBI-12007918">
        <id>O00154-4</id>
        <label>ACOT7</label>
    </interactant>
    <organismsDiffer>false</organismsDiffer>
    <experiments>3</experiments>
</comment>
<comment type="interaction">
    <interactant intactId="EBI-744099">
        <id>Q9H0I2</id>
    </interactant>
    <interactant intactId="EBI-11976299">
        <id>Q5BKX5-3</id>
        <label>ACTMAP</label>
    </interactant>
    <organismsDiffer>false</organismsDiffer>
    <experiments>3</experiments>
</comment>
<comment type="interaction">
    <interactant intactId="EBI-744099">
        <id>Q9H0I2</id>
    </interactant>
    <interactant intactId="EBI-357530">
        <id>Q9ULX6</id>
        <label>AKAP8L</label>
    </interactant>
    <organismsDiffer>false</organismsDiffer>
    <experiments>3</experiments>
</comment>
<comment type="interaction">
    <interactant intactId="EBI-744099">
        <id>Q9H0I2</id>
    </interactant>
    <interactant intactId="EBI-5661893">
        <id>Q86SG2</id>
        <label>ANKRD23</label>
    </interactant>
    <organismsDiffer>false</organismsDiffer>
    <experiments>3</experiments>
</comment>
<comment type="interaction">
    <interactant intactId="EBI-744099">
        <id>Q9H0I2</id>
    </interactant>
    <interactant intactId="EBI-9381820">
        <id>Q8WVL7</id>
        <label>ANKRD49</label>
    </interactant>
    <organismsDiffer>false</organismsDiffer>
    <experiments>3</experiments>
</comment>
<comment type="interaction">
    <interactant intactId="EBI-744099">
        <id>Q9H0I2</id>
    </interactant>
    <interactant intactId="EBI-6425121">
        <id>Q96C12</id>
        <label>ARMC5</label>
    </interactant>
    <organismsDiffer>false</organismsDiffer>
    <experiments>3</experiments>
</comment>
<comment type="interaction">
    <interactant intactId="EBI-744099">
        <id>Q9H0I2</id>
    </interactant>
    <interactant intactId="EBI-2117357">
        <id>P15289</id>
        <label>ARSA</label>
    </interactant>
    <organismsDiffer>false</organismsDiffer>
    <experiments>3</experiments>
</comment>
<comment type="interaction">
    <interactant intactId="EBI-744099">
        <id>Q9H0I2</id>
    </interactant>
    <interactant intactId="EBI-14199987">
        <id>Q9Y575-3</id>
        <label>ASB3</label>
    </interactant>
    <organismsDiffer>false</organismsDiffer>
    <experiments>3</experiments>
</comment>
<comment type="interaction">
    <interactant intactId="EBI-744099">
        <id>Q9H0I2</id>
    </interactant>
    <interactant intactId="EBI-8640233">
        <id>Q5T686</id>
        <label>AVPI1</label>
    </interactant>
    <organismsDiffer>false</organismsDiffer>
    <experiments>3</experiments>
</comment>
<comment type="interaction">
    <interactant intactId="EBI-744099">
        <id>Q9H0I2</id>
    </interactant>
    <interactant intactId="EBI-11524452">
        <id>Q8N9N5-2</id>
        <label>BANP</label>
    </interactant>
    <organismsDiffer>false</organismsDiffer>
    <experiments>3</experiments>
</comment>
<comment type="interaction">
    <interactant intactId="EBI-744099">
        <id>Q9H0I2</id>
    </interactant>
    <interactant intactId="EBI-1050106">
        <id>O75934</id>
        <label>BCAS2</label>
    </interactant>
    <organismsDiffer>false</organismsDiffer>
    <experiments>3</experiments>
</comment>
<comment type="interaction">
    <interactant intactId="EBI-744099">
        <id>Q9H0I2</id>
    </interactant>
    <interactant intactId="EBI-13025473">
        <id>Q8TDM0-3</id>
        <label>BCAS4</label>
    </interactant>
    <organismsDiffer>false</organismsDiffer>
    <experiments>3</experiments>
</comment>
<comment type="interaction">
    <interactant intactId="EBI-744099">
        <id>Q9H0I2</id>
    </interactant>
    <interactant intactId="EBI-742722">
        <id>Q9BUH8</id>
        <label>BEGAIN</label>
    </interactant>
    <organismsDiffer>false</organismsDiffer>
    <experiments>4</experiments>
</comment>
<comment type="interaction">
    <interactant intactId="EBI-744099">
        <id>Q9H0I2</id>
    </interactant>
    <interactant intactId="EBI-741753">
        <id>Q00994</id>
        <label>BEX3</label>
    </interactant>
    <organismsDiffer>false</organismsDiffer>
    <experiments>3</experiments>
</comment>
<comment type="interaction">
    <interactant intactId="EBI-744099">
        <id>Q9H0I2</id>
    </interactant>
    <interactant intactId="EBI-2548012">
        <id>Q9H2G9</id>
        <label>BLZF1</label>
    </interactant>
    <organismsDiffer>false</organismsDiffer>
    <experiments>5</experiments>
</comment>
<comment type="interaction">
    <interactant intactId="EBI-744099">
        <id>Q9H0I2</id>
    </interactant>
    <interactant intactId="EBI-10826195">
        <id>Q6PJG6</id>
        <label>BRAT1</label>
    </interactant>
    <organismsDiffer>false</organismsDiffer>
    <experiments>3</experiments>
</comment>
<comment type="interaction">
    <interactant intactId="EBI-744099">
        <id>Q9H0I2</id>
    </interactant>
    <interactant intactId="EBI-10191951">
        <id>O95561</id>
        <label>C1orf105</label>
    </interactant>
    <organismsDiffer>false</organismsDiffer>
    <experiments>3</experiments>
</comment>
<comment type="interaction">
    <interactant intactId="EBI-744099">
        <id>Q9H0I2</id>
    </interactant>
    <interactant intactId="EBI-749920">
        <id>Q9P1Z2</id>
        <label>CALCOCO1</label>
    </interactant>
    <organismsDiffer>false</organismsDiffer>
    <experiments>3</experiments>
</comment>
<comment type="interaction">
    <interactant intactId="EBI-744099">
        <id>Q9H0I2</id>
    </interactant>
    <interactant intactId="EBI-739580">
        <id>Q13137</id>
        <label>CALCOCO2</label>
    </interactant>
    <organismsDiffer>false</organismsDiffer>
    <experiments>4</experiments>
</comment>
<comment type="interaction">
    <interactant intactId="EBI-744099">
        <id>Q9H0I2</id>
    </interactant>
    <interactant intactId="EBI-947308">
        <id>Q9Y3M2</id>
        <label>CBY1</label>
    </interactant>
    <organismsDiffer>false</organismsDiffer>
    <experiments>3</experiments>
</comment>
<comment type="interaction">
    <interactant intactId="EBI-744099">
        <id>Q9H0I2</id>
    </interactant>
    <interactant intactId="EBI-741724">
        <id>Q8NA61</id>
        <label>CBY2</label>
    </interactant>
    <organismsDiffer>false</organismsDiffer>
    <experiments>3</experiments>
</comment>
<comment type="interaction">
    <interactant intactId="EBI-744099">
        <id>Q9H0I2</id>
    </interactant>
    <interactant intactId="EBI-11524851">
        <id>Q8NA61-2</id>
        <label>CBY2</label>
    </interactant>
    <organismsDiffer>false</organismsDiffer>
    <experiments>3</experiments>
</comment>
<comment type="interaction">
    <interactant intactId="EBI-744099">
        <id>Q9H0I2</id>
    </interactant>
    <interactant intactId="EBI-10171570">
        <id>Q68D86</id>
        <label>CCDC102B</label>
    </interactant>
    <organismsDiffer>false</organismsDiffer>
    <experiments>6</experiments>
</comment>
<comment type="interaction">
    <interactant intactId="EBI-744099">
        <id>Q9H0I2</id>
    </interactant>
    <interactant intactId="EBI-10961312">
        <id>Q8IYE1</id>
        <label>CCDC13</label>
    </interactant>
    <organismsDiffer>false</organismsDiffer>
    <experiments>3</experiments>
</comment>
<comment type="interaction">
    <interactant intactId="EBI-744099">
        <id>Q9H0I2</id>
    </interactant>
    <interactant intactId="EBI-10171416">
        <id>Q96JN2-2</id>
        <label>CCDC136</label>
    </interactant>
    <organismsDiffer>false</organismsDiffer>
    <experiments>3</experiments>
</comment>
<comment type="interaction">
    <interactant intactId="EBI-744099">
        <id>Q9H0I2</id>
    </interactant>
    <interactant intactId="EBI-12920646">
        <id>Q9BUN5-3</id>
        <label>CCDC28B</label>
    </interactant>
    <organismsDiffer>false</organismsDiffer>
    <experiments>3</experiments>
</comment>
<comment type="interaction">
    <interactant intactId="EBI-744099">
        <id>Q9H0I2</id>
    </interactant>
    <interactant intactId="EBI-1773949">
        <id>Q9BXL8</id>
        <label>CDCA4</label>
    </interactant>
    <organismsDiffer>false</organismsDiffer>
    <experiments>3</experiments>
</comment>
<comment type="interaction">
    <interactant intactId="EBI-744099">
        <id>Q9H0I2</id>
    </interactant>
    <interactant intactId="EBI-2802782">
        <id>Q6NVV7</id>
        <label>CDPF1</label>
    </interactant>
    <organismsDiffer>false</organismsDiffer>
    <experiments>3</experiments>
</comment>
<comment type="interaction">
    <interactant intactId="EBI-744099">
        <id>Q9H0I2</id>
    </interactant>
    <interactant intactId="EBI-1181367">
        <id>Q01850</id>
        <label>CDR2</label>
    </interactant>
    <organismsDiffer>false</organismsDiffer>
    <experiments>6</experiments>
</comment>
<comment type="interaction">
    <interactant intactId="EBI-744099">
        <id>Q9H0I2</id>
    </interactant>
    <interactant intactId="EBI-747776">
        <id>Q53EZ4</id>
        <label>CEP55</label>
    </interactant>
    <organismsDiffer>false</organismsDiffer>
    <experiments>3</experiments>
</comment>
<comment type="interaction">
    <interactant intactId="EBI-744099">
        <id>Q9H0I2</id>
    </interactant>
    <interactant intactId="EBI-739624">
        <id>Q8NHQ1</id>
        <label>CEP70</label>
    </interactant>
    <organismsDiffer>false</organismsDiffer>
    <experiments>4</experiments>
</comment>
<comment type="interaction">
    <interactant intactId="EBI-744099">
        <id>Q9H0I2</id>
    </interactant>
    <interactant intactId="EBI-743375">
        <id>Q9NX63</id>
        <label>CHCHD3</label>
    </interactant>
    <organismsDiffer>false</organismsDiffer>
    <experiments>3</experiments>
</comment>
<comment type="interaction">
    <interactant intactId="EBI-744099">
        <id>Q9H0I2</id>
    </interactant>
    <interactant intactId="EBI-741528">
        <id>Q9UKJ5</id>
        <label>CHIC2</label>
    </interactant>
    <organismsDiffer>false</organismsDiffer>
    <experiments>3</experiments>
</comment>
<comment type="interaction">
    <interactant intactId="EBI-744099">
        <id>Q9H0I2</id>
    </interactant>
    <interactant intactId="EBI-12593838">
        <id>Q6WN34-2</id>
        <label>CHRDL2</label>
    </interactant>
    <organismsDiffer>false</organismsDiffer>
    <experiments>3</experiments>
</comment>
<comment type="interaction">
    <interactant intactId="EBI-744099">
        <id>Q9H0I2</id>
    </interactant>
    <interactant intactId="EBI-6269632">
        <id>Q96BR5</id>
        <label>COA7</label>
    </interactant>
    <organismsDiffer>false</organismsDiffer>
    <experiments>3</experiments>
</comment>
<comment type="interaction">
    <interactant intactId="EBI-744099">
        <id>Q9H0I2</id>
    </interactant>
    <interactant intactId="EBI-10171902">
        <id>P56545-3</id>
        <label>CTBP2</label>
    </interactant>
    <organismsDiffer>false</organismsDiffer>
    <experiments>3</experiments>
</comment>
<comment type="interaction">
    <interactant intactId="EBI-744099">
        <id>Q9H0I2</id>
    </interactant>
    <interactant intactId="EBI-3867333">
        <id>A8MQ03</id>
        <label>CYSRT1</label>
    </interactant>
    <organismsDiffer>false</organismsDiffer>
    <experiments>3</experiments>
</comment>
<comment type="interaction">
    <interactant intactId="EBI-744099">
        <id>Q9H0I2</id>
    </interactant>
    <interactant intactId="EBI-740680">
        <id>Q8WWB3</id>
        <label>DYDC1</label>
    </interactant>
    <organismsDiffer>false</organismsDiffer>
    <experiments>3</experiments>
</comment>
<comment type="interaction">
    <interactant intactId="EBI-744099">
        <id>Q9H0I2</id>
    </interactant>
    <interactant intactId="EBI-947964">
        <id>Q16610</id>
        <label>ECM1</label>
    </interactant>
    <organismsDiffer>false</organismsDiffer>
    <experiments>3</experiments>
</comment>
<comment type="interaction">
    <interactant intactId="EBI-744099">
        <id>Q9H0I2</id>
    </interactant>
    <interactant intactId="EBI-10246318">
        <id>Q5T9C2</id>
        <label>EEIG1</label>
    </interactant>
    <organismsDiffer>false</organismsDiffer>
    <experiments>3</experiments>
</comment>
<comment type="interaction">
    <interactant intactId="EBI-744099">
        <id>Q9H0I2</id>
    </interactant>
    <interactant intactId="EBI-2349927">
        <id>Q5JST6</id>
        <label>EFHC2</label>
    </interactant>
    <organismsDiffer>false</organismsDiffer>
    <experiments>3</experiments>
</comment>
<comment type="interaction">
    <interactant intactId="EBI-744099">
        <id>Q9H0I2</id>
    </interactant>
    <interactant intactId="EBI-12012124">
        <id>Q04637-9</id>
        <label>EIF4G1</label>
    </interactant>
    <organismsDiffer>false</organismsDiffer>
    <experiments>3</experiments>
</comment>
<comment type="interaction">
    <interactant intactId="EBI-744099">
        <id>Q9H0I2</id>
    </interactant>
    <interactant intactId="EBI-12807776">
        <id>O00167-2</id>
        <label>EYA2</label>
    </interactant>
    <organismsDiffer>false</organismsDiffer>
    <experiments>3</experiments>
</comment>
<comment type="interaction">
    <interactant intactId="EBI-744099">
        <id>Q9H0I2</id>
    </interactant>
    <interactant intactId="EBI-12827735">
        <id>Q86X51</id>
        <label>EZHIP</label>
    </interactant>
    <organismsDiffer>false</organismsDiffer>
    <experiments>3</experiments>
</comment>
<comment type="interaction">
    <interactant intactId="EBI-744099">
        <id>Q9H0I2</id>
    </interactant>
    <interactant intactId="EBI-12958227">
        <id>Q86W67</id>
        <label>FAM228A</label>
    </interactant>
    <organismsDiffer>false</organismsDiffer>
    <experiments>3</experiments>
</comment>
<comment type="interaction">
    <interactant intactId="EBI-744099">
        <id>Q9H0I2</id>
    </interactant>
    <interactant intactId="EBI-6658203">
        <id>Q86YD7</id>
        <label>FAM90A1</label>
    </interactant>
    <organismsDiffer>false</organismsDiffer>
    <experiments>3</experiments>
</comment>
<comment type="interaction">
    <interactant intactId="EBI-744099">
        <id>Q9H0I2</id>
    </interactant>
    <interactant intactId="EBI-11958845">
        <id>O94868-3</id>
        <label>FCHSD2</label>
    </interactant>
    <organismsDiffer>false</organismsDiffer>
    <experiments>3</experiments>
</comment>
<comment type="interaction">
    <interactant intactId="EBI-744099">
        <id>Q9H0I2</id>
    </interactant>
    <interactant intactId="EBI-744771">
        <id>O75344</id>
        <label>FKBP6</label>
    </interactant>
    <organismsDiffer>false</organismsDiffer>
    <experiments>3</experiments>
</comment>
<comment type="interaction">
    <interactant intactId="EBI-744099">
        <id>Q9H0I2</id>
    </interactant>
    <interactant intactId="EBI-852851">
        <id>P01100</id>
        <label>FOS</label>
    </interactant>
    <organismsDiffer>false</organismsDiffer>
    <experiments>3</experiments>
</comment>
<comment type="interaction">
    <interactant intactId="EBI-744099">
        <id>Q9H0I2</id>
    </interactant>
    <interactant intactId="EBI-2806743">
        <id>P53539</id>
        <label>FOSB</label>
    </interactant>
    <organismsDiffer>false</organismsDiffer>
    <experiments>3</experiments>
</comment>
<comment type="interaction">
    <interactant intactId="EBI-744099">
        <id>Q9H0I2</id>
    </interactant>
    <interactant intactId="EBI-1059030">
        <id>O95073</id>
        <label>FSBP</label>
    </interactant>
    <organismsDiffer>false</organismsDiffer>
    <experiments>3</experiments>
</comment>
<comment type="interaction">
    <interactant intactId="EBI-744099">
        <id>Q9H0I2</id>
    </interactant>
    <interactant intactId="EBI-5661036">
        <id>A1L4K1</id>
        <label>FSD2</label>
    </interactant>
    <organismsDiffer>false</organismsDiffer>
    <experiments>3</experiments>
</comment>
<comment type="interaction">
    <interactant intactId="EBI-744099">
        <id>Q9H0I2</id>
    </interactant>
    <interactant intactId="EBI-448202">
        <id>O95257</id>
        <label>GADD45G</label>
    </interactant>
    <organismsDiffer>false</organismsDiffer>
    <experiments>5</experiments>
</comment>
<comment type="interaction">
    <interactant intactId="EBI-744099">
        <id>Q9H0I2</id>
    </interactant>
    <interactant intactId="EBI-372506">
        <id>Q8TAE8</id>
        <label>GADD45GIP1</label>
    </interactant>
    <organismsDiffer>false</organismsDiffer>
    <experiments>3</experiments>
</comment>
<comment type="interaction">
    <interactant intactId="EBI-744099">
        <id>Q9H0I2</id>
    </interactant>
    <interactant intactId="EBI-711823">
        <id>Q7L5D6</id>
        <label>GET4</label>
    </interactant>
    <organismsDiffer>false</organismsDiffer>
    <experiments>3</experiments>
</comment>
<comment type="interaction">
    <interactant intactId="EBI-744099">
        <id>Q9H0I2</id>
    </interactant>
    <interactant intactId="EBI-744302">
        <id>P14136</id>
        <label>GFAP</label>
    </interactant>
    <organismsDiffer>false</organismsDiffer>
    <experiments>3</experiments>
</comment>
<comment type="interaction">
    <interactant intactId="EBI-744099">
        <id>Q9H0I2</id>
    </interactant>
    <interactant intactId="EBI-947774">
        <id>O75420</id>
        <label>GIGYF1</label>
    </interactant>
    <organismsDiffer>false</organismsDiffer>
    <experiments>3</experiments>
</comment>
<comment type="interaction">
    <interactant intactId="EBI-744099">
        <id>Q9H0I2</id>
    </interactant>
    <interactant intactId="EBI-618309">
        <id>Q08379</id>
        <label>GOLGA2</label>
    </interactant>
    <organismsDiffer>false</organismsDiffer>
    <experiments>3</experiments>
</comment>
<comment type="interaction">
    <interactant intactId="EBI-744099">
        <id>Q9H0I2</id>
    </interactant>
    <interactant intactId="EBI-11163335">
        <id>Q9NYA3</id>
        <label>GOLGA6A</label>
    </interactant>
    <organismsDiffer>false</organismsDiffer>
    <experiments>3</experiments>
</comment>
<comment type="interaction">
    <interactant intactId="EBI-744099">
        <id>Q9H0I2</id>
    </interactant>
    <interactant intactId="EBI-5916454">
        <id>A6NEM1</id>
        <label>GOLGA6L9</label>
    </interactant>
    <organismsDiffer>false</organismsDiffer>
    <experiments>3</experiments>
</comment>
<comment type="interaction">
    <interactant intactId="EBI-744099">
        <id>Q9H0I2</id>
    </interactant>
    <interactant intactId="EBI-11519926">
        <id>Q6PI77</id>
        <label>GPRASP3</label>
    </interactant>
    <organismsDiffer>false</organismsDiffer>
    <experiments>3</experiments>
</comment>
<comment type="interaction">
    <interactant intactId="EBI-744099">
        <id>Q9H0I2</id>
    </interactant>
    <interactant intactId="EBI-12827521">
        <id>Q8TE85-2</id>
        <label>GRHL3</label>
    </interactant>
    <organismsDiffer>false</organismsDiffer>
    <experiments>3</experiments>
</comment>
<comment type="interaction">
    <interactant intactId="EBI-744099">
        <id>Q9H0I2</id>
    </interactant>
    <interactant intactId="EBI-717919">
        <id>Q4V328</id>
        <label>GRIPAP1</label>
    </interactant>
    <organismsDiffer>false</organismsDiffer>
    <experiments>3</experiments>
</comment>
<comment type="interaction">
    <interactant intactId="EBI-744099">
        <id>Q9H0I2</id>
    </interactant>
    <interactant intactId="EBI-2549423">
        <id>Q6NT76</id>
        <label>HMBOX1</label>
    </interactant>
    <organismsDiffer>false</organismsDiffer>
    <experiments>3</experiments>
</comment>
<comment type="interaction">
    <interactant intactId="EBI-744099">
        <id>Q9H0I2</id>
    </interactant>
    <interactant intactId="EBI-7261162">
        <id>Q9UGU5</id>
        <label>HMGXB4</label>
    </interactant>
    <organismsDiffer>false</organismsDiffer>
    <experiments>3</experiments>
</comment>
<comment type="interaction">
    <interactant intactId="EBI-744099">
        <id>Q9H0I2</id>
    </interactant>
    <interactant intactId="EBI-351590">
        <id>P31943</id>
        <label>HNRNPH1</label>
    </interactant>
    <organismsDiffer>false</organismsDiffer>
    <experiments>3</experiments>
</comment>
<comment type="interaction">
    <interactant intactId="EBI-744099">
        <id>Q9H0I2</id>
    </interactant>
    <interactant intactId="EBI-10961706">
        <id>Q96ED9-2</id>
        <label>HOOK2</label>
    </interactant>
    <organismsDiffer>false</organismsDiffer>
    <experiments>3</experiments>
</comment>
<comment type="interaction">
    <interactant intactId="EBI-744099">
        <id>Q9H0I2</id>
    </interactant>
    <interactant intactId="EBI-740785">
        <id>P49639</id>
        <label>HOXA1</label>
    </interactant>
    <organismsDiffer>false</organismsDiffer>
    <experiments>5</experiments>
</comment>
<comment type="interaction">
    <interactant intactId="EBI-744099">
        <id>Q9H0I2</id>
    </interactant>
    <interactant intactId="EBI-7116203">
        <id>O75031</id>
        <label>HSF2BP</label>
    </interactant>
    <organismsDiffer>false</organismsDiffer>
    <experiments>3</experiments>
</comment>
<comment type="interaction">
    <interactant intactId="EBI-744099">
        <id>Q9H0I2</id>
    </interactant>
    <interactant intactId="EBI-739395">
        <id>Q16082</id>
        <label>HSPB2</label>
    </interactant>
    <organismsDiffer>false</organismsDiffer>
    <experiments>3</experiments>
</comment>
<comment type="interaction">
    <interactant intactId="EBI-744099">
        <id>Q9H0I2</id>
    </interactant>
    <interactant intactId="EBI-713450">
        <id>Q02363</id>
        <label>ID2</label>
    </interactant>
    <organismsDiffer>false</organismsDiffer>
    <experiments>3</experiments>
</comment>
<comment type="interaction">
    <interactant intactId="EBI-744099">
        <id>Q9H0I2</id>
    </interactant>
    <interactant intactId="EBI-12837046">
        <id>P05019-2</id>
        <label>IGF1</label>
    </interactant>
    <organismsDiffer>false</organismsDiffer>
    <experiments>3</experiments>
</comment>
<comment type="interaction">
    <interactant intactId="EBI-744099">
        <id>Q9H0I2</id>
    </interactant>
    <interactant intactId="EBI-947015">
        <id>P24592</id>
        <label>IGFBP6</label>
    </interactant>
    <organismsDiffer>false</organismsDiffer>
    <experiments>3</experiments>
</comment>
<comment type="interaction">
    <interactant intactId="EBI-744099">
        <id>Q9H0I2</id>
    </interactant>
    <interactant intactId="EBI-81279">
        <id>Q9Y6K9</id>
        <label>IKBKG</label>
    </interactant>
    <organismsDiffer>false</organismsDiffer>
    <experiments>3</experiments>
</comment>
<comment type="interaction">
    <interactant intactId="EBI-744099">
        <id>Q9H0I2</id>
    </interactant>
    <interactant intactId="EBI-747204">
        <id>Q9UKT9</id>
        <label>IKZF3</label>
    </interactant>
    <organismsDiffer>false</organismsDiffer>
    <experiments>3</experiments>
</comment>
<comment type="interaction">
    <interactant intactId="EBI-744099">
        <id>Q9H0I2</id>
    </interactant>
    <interactant intactId="EBI-2680803">
        <id>Q96N16</id>
        <label>JAKMIP1</label>
    </interactant>
    <organismsDiffer>false</organismsDiffer>
    <experiments>3</experiments>
</comment>
<comment type="interaction">
    <interactant intactId="EBI-744099">
        <id>Q9H0I2</id>
    </interactant>
    <interactant intactId="EBI-3437878">
        <id>Q86T90</id>
        <label>KIAA1328</label>
    </interactant>
    <organismsDiffer>false</organismsDiffer>
    <experiments>3</experiments>
</comment>
<comment type="interaction">
    <interactant intactId="EBI-744099">
        <id>Q9H0I2</id>
    </interactant>
    <interactant intactId="EBI-14069005">
        <id>Q9BVG8-5</id>
        <label>KIFC3</label>
    </interactant>
    <organismsDiffer>false</organismsDiffer>
    <experiments>3</experiments>
</comment>
<comment type="interaction">
    <interactant intactId="EBI-744099">
        <id>Q9H0I2</id>
    </interactant>
    <interactant intactId="EBI-10693436">
        <id>Q9BS75</id>
        <label>KLHL20</label>
    </interactant>
    <organismsDiffer>false</organismsDiffer>
    <experiments>3</experiments>
</comment>
<comment type="interaction">
    <interactant intactId="EBI-744099">
        <id>Q9H0I2</id>
    </interactant>
    <interactant intactId="EBI-724915">
        <id>Q53HC5</id>
        <label>KLHL26</label>
    </interactant>
    <organismsDiffer>false</organismsDiffer>
    <experiments>3</experiments>
</comment>
<comment type="interaction">
    <interactant intactId="EBI-744099">
        <id>Q9H0I2</id>
    </interactant>
    <interactant intactId="EBI-702178">
        <id>P02533</id>
        <label>KRT14</label>
    </interactant>
    <organismsDiffer>false</organismsDiffer>
    <experiments>3</experiments>
</comment>
<comment type="interaction">
    <interactant intactId="EBI-744099">
        <id>Q9H0I2</id>
    </interactant>
    <interactant intactId="EBI-739566">
        <id>P19012</id>
        <label>KRT15</label>
    </interactant>
    <organismsDiffer>false</organismsDiffer>
    <experiments>3</experiments>
</comment>
<comment type="interaction">
    <interactant intactId="EBI-744099">
        <id>Q9H0I2</id>
    </interactant>
    <interactant intactId="EBI-948001">
        <id>Q15323</id>
        <label>KRT31</label>
    </interactant>
    <organismsDiffer>false</organismsDiffer>
    <experiments>3</experiments>
</comment>
<comment type="interaction">
    <interactant intactId="EBI-744099">
        <id>Q9H0I2</id>
    </interactant>
    <interactant intactId="EBI-1058674">
        <id>Q92764</id>
        <label>KRT35</label>
    </interactant>
    <organismsDiffer>false</organismsDiffer>
    <experiments>3</experiments>
</comment>
<comment type="interaction">
    <interactant intactId="EBI-744099">
        <id>Q9H0I2</id>
    </interactant>
    <interactant intactId="EBI-10171697">
        <id>Q6A162</id>
        <label>KRT40</label>
    </interactant>
    <organismsDiffer>false</organismsDiffer>
    <experiments>3</experiments>
</comment>
<comment type="interaction">
    <interactant intactId="EBI-744099">
        <id>Q9H0I2</id>
    </interactant>
    <interactant intactId="EBI-10172150">
        <id>P60370</id>
        <label>KRTAP10-5</label>
    </interactant>
    <organismsDiffer>false</organismsDiffer>
    <experiments>3</experiments>
</comment>
<comment type="interaction">
    <interactant intactId="EBI-744099">
        <id>Q9H0I2</id>
    </interactant>
    <interactant intactId="EBI-10171774">
        <id>P60410</id>
        <label>KRTAP10-8</label>
    </interactant>
    <organismsDiffer>false</organismsDiffer>
    <experiments>3</experiments>
</comment>
<comment type="interaction">
    <interactant intactId="EBI-744099">
        <id>Q9H0I2</id>
    </interactant>
    <interactant intactId="EBI-1052037">
        <id>Q8IUC1</id>
        <label>KRTAP11-1</label>
    </interactant>
    <organismsDiffer>false</organismsDiffer>
    <experiments>3</experiments>
</comment>
<comment type="interaction">
    <interactant intactId="EBI-744099">
        <id>Q9H0I2</id>
    </interactant>
    <interactant intactId="EBI-10210845">
        <id>P59990</id>
        <label>KRTAP12-1</label>
    </interactant>
    <organismsDiffer>false</organismsDiffer>
    <experiments>3</experiments>
</comment>
<comment type="interaction">
    <interactant intactId="EBI-744099">
        <id>Q9H0I2</id>
    </interactant>
    <interactant intactId="EBI-11953846">
        <id>Q52LG2</id>
        <label>KRTAP13-2</label>
    </interactant>
    <organismsDiffer>false</organismsDiffer>
    <experiments>3</experiments>
</comment>
<comment type="interaction">
    <interactant intactId="EBI-744099">
        <id>Q9H0I2</id>
    </interactant>
    <interactant intactId="EBI-12811111">
        <id>Q8IUB9</id>
        <label>KRTAP19-1</label>
    </interactant>
    <organismsDiffer>false</organismsDiffer>
    <experiments>3</experiments>
</comment>
<comment type="interaction">
    <interactant intactId="EBI-744099">
        <id>Q9H0I2</id>
    </interactant>
    <interactant intactId="EBI-1048945">
        <id>Q3LI72</id>
        <label>KRTAP19-5</label>
    </interactant>
    <organismsDiffer>false</organismsDiffer>
    <experiments>3</experiments>
</comment>
<comment type="interaction">
    <interactant intactId="EBI-744099">
        <id>Q9H0I2</id>
    </interactant>
    <interactant intactId="EBI-12805508">
        <id>Q3LI70</id>
        <label>KRTAP19-6</label>
    </interactant>
    <organismsDiffer>false</organismsDiffer>
    <experiments>3</experiments>
</comment>
<comment type="interaction">
    <interactant intactId="EBI-744099">
        <id>Q9H0I2</id>
    </interactant>
    <interactant intactId="EBI-10302392">
        <id>Q9BYQ6</id>
        <label>KRTAP4-11</label>
    </interactant>
    <organismsDiffer>false</organismsDiffer>
    <experiments>3</experiments>
</comment>
<comment type="interaction">
    <interactant intactId="EBI-744099">
        <id>Q9H0I2</id>
    </interactant>
    <interactant intactId="EBI-3958099">
        <id>P26371</id>
        <label>KRTAP5-9</label>
    </interactant>
    <organismsDiffer>false</organismsDiffer>
    <experiments>3</experiments>
</comment>
<comment type="interaction">
    <interactant intactId="EBI-744099">
        <id>Q9H0I2</id>
    </interactant>
    <interactant intactId="EBI-11962084">
        <id>Q3LI66</id>
        <label>KRTAP6-2</label>
    </interactant>
    <organismsDiffer>false</organismsDiffer>
    <experiments>3</experiments>
</comment>
<comment type="interaction">
    <interactant intactId="EBI-744099">
        <id>Q9H0I2</id>
    </interactant>
    <interactant intactId="EBI-749878">
        <id>Q8IYD9</id>
        <label>LAS2</label>
    </interactant>
    <organismsDiffer>false</organismsDiffer>
    <experiments>3</experiments>
</comment>
<comment type="interaction">
    <interactant intactId="EBI-744099">
        <id>Q9H0I2</id>
    </interactant>
    <interactant intactId="EBI-740738">
        <id>O95751</id>
        <label>LDOC1</label>
    </interactant>
    <organismsDiffer>false</organismsDiffer>
    <experiments>3</experiments>
</comment>
<comment type="interaction">
    <interactant intactId="EBI-744099">
        <id>Q9H0I2</id>
    </interactant>
    <interactant intactId="EBI-12039345">
        <id>Q9UBR4-2</id>
        <label>LHX3</label>
    </interactant>
    <organismsDiffer>false</organismsDiffer>
    <experiments>3</experiments>
</comment>
<comment type="interaction">
    <interactant intactId="EBI-744099">
        <id>Q9H0I2</id>
    </interactant>
    <interactant intactId="EBI-821335">
        <id>Q9HAP6</id>
        <label>LIN7B</label>
    </interactant>
    <organismsDiffer>false</organismsDiffer>
    <experiments>3</experiments>
</comment>
<comment type="interaction">
    <interactant intactId="EBI-744099">
        <id>Q9H0I2</id>
    </interactant>
    <interactant intactId="EBI-11959475">
        <id>P25791-3</id>
        <label>LMO2</label>
    </interactant>
    <organismsDiffer>false</organismsDiffer>
    <experiments>3</experiments>
</comment>
<comment type="interaction">
    <interactant intactId="EBI-744099">
        <id>Q9H0I2</id>
    </interactant>
    <interactant intactId="EBI-2350424">
        <id>Q9BV99</id>
        <label>LRRC61</label>
    </interactant>
    <organismsDiffer>false</organismsDiffer>
    <experiments>3</experiments>
</comment>
<comment type="interaction">
    <interactant intactId="EBI-744099">
        <id>Q9H0I2</id>
    </interactant>
    <interactant intactId="EBI-741355">
        <id>Q96LR2</id>
        <label>LURAP1</label>
    </interactant>
    <organismsDiffer>false</organismsDiffer>
    <experiments>3</experiments>
</comment>
<comment type="interaction">
    <interactant intactId="EBI-744099">
        <id>Q9H0I2</id>
    </interactant>
    <interactant intactId="EBI-1216080">
        <id>Q9Y250</id>
        <label>LZTS1</label>
    </interactant>
    <organismsDiffer>false</organismsDiffer>
    <experiments>3</experiments>
</comment>
<comment type="interaction">
    <interactant intactId="EBI-744099">
        <id>Q9H0I2</id>
    </interactant>
    <interactant intactId="EBI-713568">
        <id>P45984</id>
        <label>MAPK9</label>
    </interactant>
    <organismsDiffer>false</organismsDiffer>
    <experiments>3</experiments>
</comment>
<comment type="interaction">
    <interactant intactId="EBI-744099">
        <id>Q9H0I2</id>
    </interactant>
    <interactant intactId="EBI-12072296">
        <id>O95460-2</id>
        <label>MATN4</label>
    </interactant>
    <organismsDiffer>false</organismsDiffer>
    <experiments>3</experiments>
</comment>
<comment type="interaction">
    <interactant intactId="EBI-744099">
        <id>Q9H0I2</id>
    </interactant>
    <interactant intactId="EBI-724076">
        <id>Q99750</id>
        <label>MDFI</label>
    </interactant>
    <organismsDiffer>false</organismsDiffer>
    <experiments>8</experiments>
</comment>
<comment type="interaction">
    <interactant intactId="EBI-744099">
        <id>Q9H0I2</id>
    </interactant>
    <interactant intactId="EBI-18582591">
        <id>Q99687-3</id>
        <label>MEIS3</label>
    </interactant>
    <organismsDiffer>false</organismsDiffer>
    <experiments>3</experiments>
</comment>
<comment type="interaction">
    <interactant intactId="EBI-744099">
        <id>Q9H0I2</id>
    </interactant>
    <interactant intactId="EBI-6165891">
        <id>Q14696</id>
        <label>MESD</label>
    </interactant>
    <organismsDiffer>false</organismsDiffer>
    <experiments>3</experiments>
</comment>
<comment type="interaction">
    <interactant intactId="EBI-744099">
        <id>Q9H0I2</id>
    </interactant>
    <interactant intactId="EBI-8487781">
        <id>Q8N6F8</id>
        <label>METTL27</label>
    </interactant>
    <organismsDiffer>false</organismsDiffer>
    <experiments>3</experiments>
</comment>
<comment type="interaction">
    <interactant intactId="EBI-744099">
        <id>Q9H0I2</id>
    </interactant>
    <interactant intactId="EBI-10172526">
        <id>Q9UJV3-2</id>
        <label>MID2</label>
    </interactant>
    <organismsDiffer>false</organismsDiffer>
    <experiments>3</experiments>
</comment>
<comment type="interaction">
    <interactant intactId="EBI-744099">
        <id>Q9H0I2</id>
    </interactant>
    <interactant intactId="EBI-9118295">
        <id>A9UHW6-2</id>
        <label>MIF4GD</label>
    </interactant>
    <organismsDiffer>false</organismsDiffer>
    <experiments>3</experiments>
</comment>
<comment type="interaction">
    <interactant intactId="EBI-744099">
        <id>Q9H0I2</id>
    </interactant>
    <interactant intactId="EBI-2548751">
        <id>Q8TD10</id>
        <label>MIPOL1</label>
    </interactant>
    <organismsDiffer>false</organismsDiffer>
    <experiments>6</experiments>
</comment>
<comment type="interaction">
    <interactant intactId="EBI-744099">
        <id>Q9H0I2</id>
    </interactant>
    <interactant intactId="EBI-2555085">
        <id>Q8IVT2</id>
        <label>MISP</label>
    </interactant>
    <organismsDiffer>false</organismsDiffer>
    <experiments>3</experiments>
</comment>
<comment type="interaction">
    <interactant intactId="EBI-744099">
        <id>Q9H0I2</id>
    </interactant>
    <interactant intactId="EBI-2340269">
        <id>Q13064</id>
        <label>MKRN3</label>
    </interactant>
    <organismsDiffer>false</organismsDiffer>
    <experiments>4</experiments>
</comment>
<comment type="interaction">
    <interactant intactId="EBI-744099">
        <id>Q9H0I2</id>
    </interactant>
    <interactant intactId="EBI-744248">
        <id>P40692</id>
        <label>MLH1</label>
    </interactant>
    <organismsDiffer>false</organismsDiffer>
    <experiments>3</experiments>
</comment>
<comment type="interaction">
    <interactant intactId="EBI-744099">
        <id>Q9H0I2</id>
    </interactant>
    <interactant intactId="EBI-9675802">
        <id>Q6PF18</id>
        <label>MORN3</label>
    </interactant>
    <organismsDiffer>false</organismsDiffer>
    <experiments>3</experiments>
</comment>
<comment type="interaction">
    <interactant intactId="EBI-744099">
        <id>Q9H0I2</id>
    </interactant>
    <interactant intactId="EBI-12835568">
        <id>Q5VZ52</id>
        <label>MORN5</label>
    </interactant>
    <organismsDiffer>false</organismsDiffer>
    <experiments>3</experiments>
</comment>
<comment type="interaction">
    <interactant intactId="EBI-744099">
        <id>Q9H0I2</id>
    </interactant>
    <interactant intactId="EBI-2857471">
        <id>Q6NTE8</id>
        <label>MRNIP</label>
    </interactant>
    <organismsDiffer>false</organismsDiffer>
    <experiments>3</experiments>
</comment>
<comment type="interaction">
    <interactant intactId="EBI-744099">
        <id>Q9H0I2</id>
    </interactant>
    <interactant intactId="EBI-723426">
        <id>Q13084</id>
        <label>MRPL28</label>
    </interactant>
    <organismsDiffer>false</organismsDiffer>
    <experiments>3</experiments>
</comment>
<comment type="interaction">
    <interactant intactId="EBI-744099">
        <id>Q9H0I2</id>
    </interactant>
    <interactant intactId="EBI-720441">
        <id>Q96DV4</id>
        <label>MRPL38</label>
    </interactant>
    <organismsDiffer>false</organismsDiffer>
    <experiments>3</experiments>
</comment>
<comment type="interaction">
    <interactant intactId="EBI-744099">
        <id>Q9H0I2</id>
    </interactant>
    <interactant intactId="EBI-11522433">
        <id>Q5JR59-3</id>
        <label>MTUS2</label>
    </interactant>
    <organismsDiffer>false</organismsDiffer>
    <experiments>3</experiments>
</comment>
<comment type="interaction">
    <interactant intactId="EBI-744099">
        <id>Q9H0I2</id>
    </interactant>
    <interactant intactId="EBI-17491620">
        <id>P13349</id>
        <label>MYF5</label>
    </interactant>
    <organismsDiffer>false</organismsDiffer>
    <experiments>5</experiments>
</comment>
<comment type="interaction">
    <interactant intactId="EBI-744099">
        <id>Q9H0I2</id>
    </interactant>
    <interactant intactId="EBI-5662487">
        <id>Q8TDC0</id>
        <label>MYOZ3</label>
    </interactant>
    <organismsDiffer>false</organismsDiffer>
    <experiments>3</experiments>
</comment>
<comment type="interaction">
    <interactant intactId="EBI-744099">
        <id>Q9H0I2</id>
    </interactant>
    <interactant intactId="EBI-2512055">
        <id>O15049</id>
        <label>N4BP3</label>
    </interactant>
    <organismsDiffer>false</organismsDiffer>
    <experiments>3</experiments>
</comment>
<comment type="interaction">
    <interactant intactId="EBI-744099">
        <id>Q9H0I2</id>
    </interactant>
    <interactant intactId="EBI-8641936">
        <id>Q15742</id>
        <label>NAB2</label>
    </interactant>
    <organismsDiffer>false</organismsDiffer>
    <experiments>3</experiments>
</comment>
<comment type="interaction">
    <interactant intactId="EBI-744099">
        <id>Q9H0I2</id>
    </interactant>
    <interactant intactId="EBI-10963850">
        <id>Q9NZQ3-3</id>
        <label>NCKIPSD</label>
    </interactant>
    <organismsDiffer>false</organismsDiffer>
    <experiments>3</experiments>
</comment>
<comment type="interaction">
    <interactant intactId="EBI-744099">
        <id>Q9H0I2</id>
    </interactant>
    <interactant intactId="EBI-1246238">
        <id>P17568</id>
        <label>NDUFB7</label>
    </interactant>
    <organismsDiffer>false</organismsDiffer>
    <experiments>3</experiments>
</comment>
<comment type="interaction">
    <interactant intactId="EBI-744099">
        <id>Q9H0I2</id>
    </interactant>
    <interactant intactId="EBI-10178578">
        <id>I6L9F6</id>
        <label>NEFL</label>
    </interactant>
    <organismsDiffer>false</organismsDiffer>
    <experiments>3</experiments>
</comment>
<comment type="interaction">
    <interactant intactId="EBI-744099">
        <id>Q9H0I2</id>
    </interactant>
    <interactant intactId="EBI-307386">
        <id>P25963</id>
        <label>NFKBIA</label>
    </interactant>
    <organismsDiffer>false</organismsDiffer>
    <experiments>3</experiments>
</comment>
<comment type="interaction">
    <interactant intactId="EBI-744099">
        <id>Q9H0I2</id>
    </interactant>
    <interactant intactId="EBI-12868744">
        <id>P0CG21</id>
        <label>NHLRC4</label>
    </interactant>
    <organismsDiffer>false</organismsDiffer>
    <experiments>3</experiments>
</comment>
<comment type="interaction">
    <interactant intactId="EBI-744099">
        <id>Q9H0I2</id>
    </interactant>
    <interactant intactId="EBI-18583589">
        <id>A6NGQ2</id>
        <label>OOEP</label>
    </interactant>
    <organismsDiffer>false</organismsDiffer>
    <experiments>3</experiments>
</comment>
<comment type="interaction">
    <interactant intactId="EBI-744099">
        <id>Q9H0I2</id>
    </interactant>
    <interactant intactId="EBI-741896">
        <id>Q9P286</id>
        <label>PAK5</label>
    </interactant>
    <organismsDiffer>false</organismsDiffer>
    <experiments>3</experiments>
</comment>
<comment type="interaction">
    <interactant intactId="EBI-744099">
        <id>Q9H0I2</id>
    </interactant>
    <interactant intactId="EBI-747655">
        <id>Q9NVD7</id>
        <label>PARVA</label>
    </interactant>
    <organismsDiffer>false</organismsDiffer>
    <experiments>3</experiments>
</comment>
<comment type="interaction">
    <interactant intactId="EBI-744099">
        <id>Q9H0I2</id>
    </interactant>
    <interactant intactId="EBI-350517">
        <id>Q9NR12</id>
        <label>PDLIM7</label>
    </interactant>
    <organismsDiffer>false</organismsDiffer>
    <experiments>6</experiments>
</comment>
<comment type="interaction">
    <interactant intactId="EBI-744099">
        <id>Q9H0I2</id>
    </interactant>
    <interactant intactId="EBI-10239064">
        <id>Q17RL8</id>
        <label>PDZD4</label>
    </interactant>
    <organismsDiffer>false</organismsDiffer>
    <experiments>3</experiments>
</comment>
<comment type="interaction">
    <interactant intactId="EBI-744099">
        <id>Q9H0I2</id>
    </interactant>
    <interactant intactId="EBI-713786">
        <id>Q8IXK0</id>
        <label>PHC2</label>
    </interactant>
    <organismsDiffer>false</organismsDiffer>
    <experiments>4</experiments>
</comment>
<comment type="interaction">
    <interactant intactId="EBI-744099">
        <id>Q9H0I2</id>
    </interactant>
    <interactant intactId="EBI-14066006">
        <id>Q4G0R1</id>
        <label>PIBF1</label>
    </interactant>
    <organismsDiffer>false</organismsDiffer>
    <experiments>3</experiments>
</comment>
<comment type="interaction">
    <interactant intactId="EBI-744099">
        <id>Q9H0I2</id>
    </interactant>
    <interactant intactId="EBI-79165">
        <id>Q9NRD5</id>
        <label>PICK1</label>
    </interactant>
    <organismsDiffer>false</organismsDiffer>
    <experiments>3</experiments>
</comment>
<comment type="interaction">
    <interactant intactId="EBI-744099">
        <id>Q9H0I2</id>
    </interactant>
    <interactant intactId="EBI-10232538">
        <id>Q8WWB5</id>
        <label>PIH1D2</label>
    </interactant>
    <organismsDiffer>false</organismsDiffer>
    <experiments>3</experiments>
</comment>
<comment type="interaction">
    <interactant intactId="EBI-744099">
        <id>Q9H0I2</id>
    </interactant>
    <interactant intactId="EBI-79893">
        <id>Q92569</id>
        <label>PIK3R3</label>
    </interactant>
    <organismsDiffer>false</organismsDiffer>
    <experiments>3</experiments>
</comment>
<comment type="interaction">
    <interactant intactId="EBI-744099">
        <id>Q9H0I2</id>
    </interactant>
    <interactant intactId="EBI-2692890">
        <id>Q96KN3</id>
        <label>PKNOX2</label>
    </interactant>
    <organismsDiffer>false</organismsDiffer>
    <experiments>3</experiments>
</comment>
<comment type="interaction">
    <interactant intactId="EBI-744099">
        <id>Q9H0I2</id>
    </interactant>
    <interactant intactId="EBI-302345">
        <id>Q8ND90</id>
        <label>PNMA1</label>
    </interactant>
    <organismsDiffer>false</organismsDiffer>
    <experiments>4</experiments>
</comment>
<comment type="interaction">
    <interactant intactId="EBI-744099">
        <id>Q9H0I2</id>
    </interactant>
    <interactant intactId="EBI-302355">
        <id>Q9UL42</id>
        <label>PNMA2</label>
    </interactant>
    <organismsDiffer>false</organismsDiffer>
    <experiments>8</experiments>
</comment>
<comment type="interaction">
    <interactant intactId="EBI-744099">
        <id>Q9H0I2</id>
    </interactant>
    <interactant intactId="EBI-5452779">
        <id>Q9BUI4</id>
        <label>POLR3C</label>
    </interactant>
    <organismsDiffer>false</organismsDiffer>
    <experiments>3</experiments>
</comment>
<comment type="interaction">
    <interactant intactId="EBI-744099">
        <id>Q9H0I2</id>
    </interactant>
    <interactant intactId="EBI-2561661">
        <id>Q969Q6</id>
        <label>PPP2R3C</label>
    </interactant>
    <organismsDiffer>false</organismsDiffer>
    <experiments>3</experiments>
</comment>
<comment type="interaction">
    <interactant intactId="EBI-744099">
        <id>Q9H0I2</id>
    </interactant>
    <interactant intactId="EBI-3957793">
        <id>Q9GZV8</id>
        <label>PRDM14</label>
    </interactant>
    <organismsDiffer>false</organismsDiffer>
    <experiments>3</experiments>
</comment>
<comment type="interaction">
    <interactant intactId="EBI-744099">
        <id>Q9H0I2</id>
    </interactant>
    <interactant intactId="EBI-11320284">
        <id>Q9NQX0</id>
        <label>PRDM6</label>
    </interactant>
    <organismsDiffer>false</organismsDiffer>
    <experiments>3</experiments>
</comment>
<comment type="interaction">
    <interactant intactId="EBI-744099">
        <id>Q9H0I2</id>
    </interactant>
    <interactant intactId="EBI-2340624">
        <id>Q9BYM8</id>
        <label>RBCK1</label>
    </interactant>
    <organismsDiffer>false</organismsDiffer>
    <experiments>3</experiments>
</comment>
<comment type="interaction">
    <interactant intactId="EBI-744099">
        <id>Q9H0I2</id>
    </interactant>
    <interactant intactId="EBI-741332">
        <id>P57052</id>
        <label>RBM11</label>
    </interactant>
    <organismsDiffer>false</organismsDiffer>
    <experiments>3</experiments>
</comment>
<comment type="interaction">
    <interactant intactId="EBI-744099">
        <id>Q9H0I2</id>
    </interactant>
    <interactant intactId="EBI-948278">
        <id>Q15293</id>
        <label>RCN1</label>
    </interactant>
    <organismsDiffer>false</organismsDiffer>
    <experiments>3</experiments>
</comment>
<comment type="interaction">
    <interactant intactId="EBI-744099">
        <id>Q9H0I2</id>
    </interactant>
    <interactant intactId="EBI-2952709">
        <id>Q92622</id>
        <label>RUBCN</label>
    </interactant>
    <organismsDiffer>false</organismsDiffer>
    <experiments>3</experiments>
</comment>
<comment type="interaction">
    <interactant intactId="EBI-744099">
        <id>Q9H0I2</id>
    </interactant>
    <interactant intactId="EBI-11957366">
        <id>Q59EK9-3</id>
        <label>RUNDC3A</label>
    </interactant>
    <organismsDiffer>false</organismsDiffer>
    <experiments>3</experiments>
</comment>
<comment type="interaction">
    <interactant intactId="EBI-744099">
        <id>Q9H0I2</id>
    </interactant>
    <interactant intactId="EBI-748621">
        <id>Q9UJW9</id>
        <label>SERTAD3</label>
    </interactant>
    <organismsDiffer>false</organismsDiffer>
    <experiments>3</experiments>
</comment>
<comment type="interaction">
    <interactant intactId="EBI-744099">
        <id>Q9H0I2</id>
    </interactant>
    <interactant intactId="EBI-12806032">
        <id>Q16348</id>
        <label>SLC15A2</label>
    </interactant>
    <organismsDiffer>false</organismsDiffer>
    <experiments>3</experiments>
</comment>
<comment type="interaction">
    <interactant intactId="EBI-744099">
        <id>Q9H0I2</id>
    </interactant>
    <interactant intactId="EBI-347919">
        <id>Q9H7B4</id>
        <label>SMYD3</label>
    </interactant>
    <organismsDiffer>false</organismsDiffer>
    <experiments>3</experiments>
</comment>
<comment type="interaction">
    <interactant intactId="EBI-744099">
        <id>Q9H0I2</id>
    </interactant>
    <interactant intactId="EBI-2876632">
        <id>Q6IEG0</id>
        <label>SNRNP48</label>
    </interactant>
    <organismsDiffer>false</organismsDiffer>
    <experiments>3</experiments>
</comment>
<comment type="interaction">
    <interactant intactId="EBI-744099">
        <id>Q9H0I2</id>
    </interactant>
    <interactant intactId="EBI-741237">
        <id>O60504</id>
        <label>SORBS3</label>
    </interactant>
    <organismsDiffer>false</organismsDiffer>
    <experiments>3</experiments>
</comment>
<comment type="interaction">
    <interactant intactId="EBI-744099">
        <id>Q9H0I2</id>
    </interactant>
    <interactant intactId="EBI-750105">
        <id>Q5T0L3</id>
        <label>SPATA46</label>
    </interactant>
    <organismsDiffer>false</organismsDiffer>
    <experiments>3</experiments>
</comment>
<comment type="interaction">
    <interactant intactId="EBI-744099">
        <id>Q9H0I2</id>
    </interactant>
    <interactant intactId="EBI-12811275">
        <id>O95238</id>
        <label>SPDEF</label>
    </interactant>
    <organismsDiffer>false</organismsDiffer>
    <experiments>3</experiments>
</comment>
<comment type="interaction">
    <interactant intactId="EBI-744099">
        <id>Q9H0I2</id>
    </interactant>
    <interactant intactId="EBI-311086">
        <id>Q92563</id>
        <label>SPOCK2</label>
    </interactant>
    <organismsDiffer>false</organismsDiffer>
    <experiments>3</experiments>
</comment>
<comment type="interaction">
    <interactant intactId="EBI-744099">
        <id>Q9H0I2</id>
    </interactant>
    <interactant intactId="EBI-3937206">
        <id>Q6PJ21</id>
        <label>SPSB3</label>
    </interactant>
    <organismsDiffer>false</organismsDiffer>
    <experiments>6</experiments>
</comment>
<comment type="interaction">
    <interactant intactId="EBI-744099">
        <id>Q9H0I2</id>
    </interactant>
    <interactant intactId="EBI-18616594">
        <id>Q8IXS7</id>
        <label>SRGAP3</label>
    </interactant>
    <organismsDiffer>false</organismsDiffer>
    <experiments>3</experiments>
</comment>
<comment type="interaction">
    <interactant intactId="EBI-744099">
        <id>Q9H0I2</id>
    </interactant>
    <interactant intactId="EBI-745680">
        <id>Q96MF2</id>
        <label>STAC3</label>
    </interactant>
    <organismsDiffer>false</organismsDiffer>
    <experiments>4</experiments>
</comment>
<comment type="interaction">
    <interactant intactId="EBI-744099">
        <id>Q9H0I2</id>
    </interactant>
    <interactant intactId="EBI-725557">
        <id>Q9NZ72</id>
        <label>STMN3</label>
    </interactant>
    <organismsDiffer>false</organismsDiffer>
    <experiments>3</experiments>
</comment>
<comment type="interaction">
    <interactant intactId="EBI-744099">
        <id>Q9H0I2</id>
    </interactant>
    <interactant intactId="EBI-10318905">
        <id>Q08AL9</id>
        <label>STXBP4</label>
    </interactant>
    <organismsDiffer>false</organismsDiffer>
    <experiments>3</experiments>
</comment>
<comment type="interaction">
    <interactant intactId="EBI-744099">
        <id>Q9H0I2</id>
    </interactant>
    <interactant intactId="EBI-752030">
        <id>Q96A09</id>
        <label>TENT5B</label>
    </interactant>
    <organismsDiffer>false</organismsDiffer>
    <experiments>3</experiments>
</comment>
<comment type="interaction">
    <interactant intactId="EBI-744099">
        <id>Q9H0I2</id>
    </interactant>
    <interactant intactId="EBI-746692">
        <id>P19237</id>
        <label>TNNI1</label>
    </interactant>
    <organismsDiffer>false</organismsDiffer>
    <experiments>3</experiments>
</comment>
<comment type="interaction">
    <interactant intactId="EBI-744099">
        <id>Q9H0I2</id>
    </interactant>
    <interactant intactId="EBI-949753">
        <id>Q63HR2</id>
        <label>TNS2</label>
    </interactant>
    <organismsDiffer>false</organismsDiffer>
    <experiments>3</experiments>
</comment>
<comment type="interaction">
    <interactant intactId="EBI-744099">
        <id>Q9H0I2</id>
    </interactant>
    <interactant intactId="EBI-12815137">
        <id>Q96NM4-3</id>
        <label>TOX2</label>
    </interactant>
    <organismsDiffer>false</organismsDiffer>
    <experiments>3</experiments>
</comment>
<comment type="interaction">
    <interactant intactId="EBI-744099">
        <id>Q9H0I2</id>
    </interactant>
    <interactant intactId="EBI-359224">
        <id>Q13077</id>
        <label>TRAF1</label>
    </interactant>
    <organismsDiffer>false</organismsDiffer>
    <experiments>3</experiments>
</comment>
<comment type="interaction">
    <interactant intactId="EBI-744099">
        <id>Q9H0I2</id>
    </interactant>
    <interactant intactId="EBI-355744">
        <id>Q12933</id>
        <label>TRAF2</label>
    </interactant>
    <organismsDiffer>false</organismsDiffer>
    <experiments>7</experiments>
</comment>
<comment type="interaction">
    <interactant intactId="EBI-744099">
        <id>Q9H0I2</id>
    </interactant>
    <interactant intactId="EBI-740098">
        <id>P36406</id>
        <label>TRIM23</label>
    </interactant>
    <organismsDiffer>false</organismsDiffer>
    <experiments>3</experiments>
</comment>
<comment type="interaction">
    <interactant intactId="EBI-744099">
        <id>Q9H0I2</id>
    </interactant>
    <interactant intactId="EBI-719493">
        <id>P14373</id>
        <label>TRIM27</label>
    </interactant>
    <organismsDiffer>false</organismsDiffer>
    <experiments>3</experiments>
</comment>
<comment type="interaction">
    <interactant intactId="EBI-744099">
        <id>Q9H0I2</id>
    </interactant>
    <interactant intactId="EBI-17716262">
        <id>Q9UPQ4-2</id>
        <label>TRIM35</label>
    </interactant>
    <organismsDiffer>false</organismsDiffer>
    <experiments>3</experiments>
</comment>
<comment type="interaction">
    <interactant intactId="EBI-744099">
        <id>Q9H0I2</id>
    </interactant>
    <interactant intactId="EBI-2130429">
        <id>Q9BYV2</id>
        <label>TRIM54</label>
    </interactant>
    <organismsDiffer>false</organismsDiffer>
    <experiments>6</experiments>
</comment>
<comment type="interaction">
    <interactant intactId="EBI-744099">
        <id>Q9H0I2</id>
    </interactant>
    <interactant intactId="EBI-12806590">
        <id>Q86WV8</id>
        <label>TSC1</label>
    </interactant>
    <organismsDiffer>false</organismsDiffer>
    <experiments>3</experiments>
</comment>
<comment type="interaction">
    <interactant intactId="EBI-744099">
        <id>Q9H0I2</id>
    </interactant>
    <interactant intactId="EBI-372432">
        <id>Q8WW01</id>
        <label>TSEN15</label>
    </interactant>
    <organismsDiffer>false</organismsDiffer>
    <experiments>3</experiments>
</comment>
<comment type="interaction">
    <interactant intactId="EBI-744099">
        <id>Q9H0I2</id>
    </interactant>
    <interactant intactId="EBI-9090990">
        <id>Q5W5X9-3</id>
        <label>TTC23</label>
    </interactant>
    <organismsDiffer>false</organismsDiffer>
    <experiments>3</experiments>
</comment>
<comment type="interaction">
    <interactant intactId="EBI-744099">
        <id>Q9H0I2</id>
    </interactant>
    <interactant intactId="EBI-746004">
        <id>Q5T124</id>
        <label>UBXN11</label>
    </interactant>
    <organismsDiffer>false</organismsDiffer>
    <experiments>3</experiments>
</comment>
<comment type="interaction">
    <interactant intactId="EBI-744099">
        <id>Q9H0I2</id>
    </interactant>
    <interactant intactId="EBI-11524408">
        <id>Q5T124-6</id>
        <label>UBXN11</label>
    </interactant>
    <organismsDiffer>false</organismsDiffer>
    <experiments>3</experiments>
</comment>
<comment type="interaction">
    <interactant intactId="EBI-744099">
        <id>Q9H0I2</id>
    </interactant>
    <interactant intactId="EBI-11523636">
        <id>Q9Y6N9-4</id>
        <label>USH1C</label>
    </interactant>
    <organismsDiffer>false</organismsDiffer>
    <experiments>3</experiments>
</comment>
<comment type="interaction">
    <interactant intactId="EBI-744099">
        <id>Q9H0I2</id>
    </interactant>
    <interactant intactId="EBI-8601749">
        <id>Q495M9</id>
        <label>USH1G</label>
    </interactant>
    <organismsDiffer>false</organismsDiffer>
    <experiments>3</experiments>
</comment>
<comment type="interaction">
    <interactant intactId="EBI-744099">
        <id>Q9H0I2</id>
    </interactant>
    <interactant intactId="EBI-739895">
        <id>Q8N6Y0</id>
        <label>USHBP1</label>
    </interactant>
    <organismsDiffer>false</organismsDiffer>
    <experiments>3</experiments>
</comment>
<comment type="interaction">
    <interactant intactId="EBI-744099">
        <id>Q9H0I2</id>
    </interactant>
    <interactant intactId="EBI-2511991">
        <id>Q9Y2K6</id>
        <label>USP20</label>
    </interactant>
    <organismsDiffer>false</organismsDiffer>
    <experiments>3</experiments>
</comment>
<comment type="interaction">
    <interactant intactId="EBI-744099">
        <id>Q9H0I2</id>
    </interactant>
    <interactant intactId="EBI-357430">
        <id>P61758</id>
        <label>VBP1</label>
    </interactant>
    <organismsDiffer>false</organismsDiffer>
    <experiments>3</experiments>
</comment>
<comment type="interaction">
    <interactant intactId="EBI-744099">
        <id>Q9H0I2</id>
    </interactant>
    <interactant intactId="EBI-4400866">
        <id>Q9H9H4</id>
        <label>VPS37B</label>
    </interactant>
    <organismsDiffer>false</organismsDiffer>
    <experiments>3</experiments>
</comment>
<comment type="interaction">
    <interactant intactId="EBI-744099">
        <id>Q9H0I2</id>
    </interactant>
    <interactant intactId="EBI-11957238">
        <id>Q2TAL6</id>
        <label>VWC2</label>
    </interactant>
    <organismsDiffer>false</organismsDiffer>
    <experiments>3</experiments>
</comment>
<comment type="interaction">
    <interactant intactId="EBI-744099">
        <id>Q9H0I2</id>
    </interactant>
    <interactant intactId="EBI-714790">
        <id>O43379</id>
        <label>WDR62</label>
    </interactant>
    <organismsDiffer>false</organismsDiffer>
    <experiments>4</experiments>
</comment>
<comment type="interaction">
    <interactant intactId="EBI-744099">
        <id>Q9H0I2</id>
    </interactant>
    <interactant intactId="EBI-12040603">
        <id>Q9NZC7-5</id>
        <label>WWOX</label>
    </interactant>
    <organismsDiffer>false</organismsDiffer>
    <experiments>3</experiments>
</comment>
<comment type="interaction">
    <interactant intactId="EBI-744099">
        <id>Q9H0I2</id>
    </interactant>
    <interactant intactId="EBI-10176632">
        <id>O43829</id>
        <label>ZBTB14</label>
    </interactant>
    <organismsDiffer>false</organismsDiffer>
    <experiments>3</experiments>
</comment>
<comment type="interaction">
    <interactant intactId="EBI-744099">
        <id>Q9H0I2</id>
    </interactant>
    <interactant intactId="EBI-14104088">
        <id>Q53FD0-2</id>
        <label>ZC2HC1C</label>
    </interactant>
    <organismsDiffer>false</organismsDiffer>
    <experiments>3</experiments>
</comment>
<comment type="interaction">
    <interactant intactId="EBI-744099">
        <id>Q9H0I2</id>
    </interactant>
    <interactant intactId="EBI-11419867">
        <id>Q8TF47</id>
        <label>ZFP90</label>
    </interactant>
    <organismsDiffer>false</organismsDiffer>
    <experiments>3</experiments>
</comment>
<comment type="interaction">
    <interactant intactId="EBI-744099">
        <id>Q9H0I2</id>
    </interactant>
    <interactant intactId="EBI-2849334">
        <id>P52747</id>
        <label>ZNF143</label>
    </interactant>
    <organismsDiffer>false</organismsDiffer>
    <experiments>3</experiments>
</comment>
<comment type="interaction">
    <interactant intactId="EBI-744099">
        <id>Q9H0I2</id>
    </interactant>
    <interactant intactId="EBI-743265">
        <id>Q9BUY5</id>
        <label>ZNF426</label>
    </interactant>
    <organismsDiffer>false</organismsDiffer>
    <experiments>3</experiments>
</comment>
<comment type="interaction">
    <interactant intactId="EBI-744099">
        <id>Q9H0I2</id>
    </interactant>
    <interactant intactId="EBI-8489702">
        <id>Q9C0F3</id>
        <label>ZNF436</label>
    </interactant>
    <organismsDiffer>false</organismsDiffer>
    <experiments>3</experiments>
</comment>
<comment type="interaction">
    <interactant intactId="EBI-744099">
        <id>Q9H0I2</id>
    </interactant>
    <interactant intactId="EBI-10269136">
        <id>Q8NB15</id>
        <label>ZNF511</label>
    </interactant>
    <organismsDiffer>false</organismsDiffer>
    <experiments>3</experiments>
</comment>
<comment type="interaction">
    <interactant intactId="EBI-744099">
        <id>Q9H0I2</id>
    </interactant>
    <interactant intactId="EBI-745520">
        <id>Q9P0T4</id>
        <label>ZNF581</label>
    </interactant>
    <organismsDiffer>false</organismsDiffer>
    <experiments>3</experiments>
</comment>
<comment type="interaction">
    <interactant intactId="EBI-744099">
        <id>Q9H0I2</id>
    </interactant>
    <interactant intactId="EBI-7254550">
        <id>P36508</id>
        <label>ZNF76</label>
    </interactant>
    <organismsDiffer>false</organismsDiffer>
    <experiments>3</experiments>
</comment>
<comment type="interaction">
    <interactant intactId="EBI-744099">
        <id>Q9H0I2</id>
    </interactant>
    <interactant intactId="EBI-10251462">
        <id>Q6NX45</id>
        <label>ZNF774</label>
    </interactant>
    <organismsDiffer>false</organismsDiffer>
    <experiments>3</experiments>
</comment>
<comment type="interaction">
    <interactant intactId="EBI-744099">
        <id>Q9H0I2</id>
    </interactant>
    <interactant intactId="EBI-527853">
        <id>Q9UGI0</id>
        <label>ZRANB1</label>
    </interactant>
    <organismsDiffer>false</organismsDiffer>
    <experiments>3</experiments>
</comment>
<comment type="interaction">
    <interactant intactId="EBI-744099">
        <id>Q9H0I2</id>
    </interactant>
    <interactant intactId="EBI-17234977">
        <id>A0A1U9X8X8</id>
    </interactant>
    <organismsDiffer>false</organismsDiffer>
    <experiments>3</experiments>
</comment>
<comment type="interaction">
    <interactant intactId="EBI-744099">
        <id>Q9H0I2</id>
    </interactant>
    <interactant intactId="EBI-10255097">
        <id>Q6ZN96</id>
    </interactant>
    <organismsDiffer>false</organismsDiffer>
    <experiments>3</experiments>
</comment>
<comment type="subcellular location">
    <subcellularLocation>
        <location evidence="4 6">Cytoplasm</location>
        <location evidence="4 6">Cytoskeleton</location>
        <location evidence="4 6">Microtubule organizing center</location>
        <location evidence="4 6">Centrosome</location>
    </subcellularLocation>
    <subcellularLocation>
        <location evidence="6">Cytoplasm</location>
        <location evidence="6">Cytoskeleton</location>
        <location evidence="6">Microtubule organizing center</location>
        <location evidence="6">Centrosome</location>
        <location evidence="6">Centriole</location>
    </subcellularLocation>
    <subcellularLocation>
        <location evidence="6">Cytoplasm</location>
        <location evidence="6">Cytoskeleton</location>
        <location evidence="6">Cilium basal body</location>
    </subcellularLocation>
    <subcellularLocation>
        <location evidence="4">Cell projection</location>
        <location evidence="4">Cilium</location>
    </subcellularLocation>
    <subcellularLocation>
        <location evidence="4">Cytoplasm</location>
        <location evidence="4">Cytoskeleton</location>
        <location evidence="4">Spindle</location>
    </subcellularLocation>
    <subcellularLocation>
        <location evidence="4">Cytoplasm</location>
        <location evidence="4">Cytoskeleton</location>
        <location evidence="4">Spindle pole</location>
    </subcellularLocation>
    <subcellularLocation>
        <location evidence="4">Cytoplasm</location>
        <location evidence="4">Cytoskeleton</location>
        <location evidence="4">Cilium axoneme</location>
    </subcellularLocation>
    <text evidence="4 6">Localized at the centrosome and accumulates at the parental centrioles during centriole duplication in cycling cells (PubMed:35301795). In ciliated cells, detected at the basal body of the cilium (PubMed:35301795). Localizes to the centrosome during interphase, to the primary cilium at G0, to the spindle poles during mitosis and to the centrosomes and central spindle during telophase and cytokinesis (PubMed:35072334).</text>
</comment>
<comment type="alternative products">
    <event type="alternative splicing"/>
    <isoform>
        <id>Q9H0I2-1</id>
        <name>1</name>
        <sequence type="displayed"/>
    </isoform>
    <isoform>
        <id>Q9H0I2-2</id>
        <name>2</name>
        <sequence type="described" ref="VSP_021904 VSP_021905"/>
    </isoform>
</comment>
<comment type="developmental stage">
    <text evidence="5">During the cell cycle, highly expressed in S, G2 and M phases.</text>
</comment>
<feature type="chain" id="PRO_0000265931" description="Enkurin domain-containing protein 1">
    <location>
        <begin position="1"/>
        <end position="346"/>
    </location>
</feature>
<feature type="domain" description="Enkurin" evidence="2">
    <location>
        <begin position="251"/>
        <end position="343"/>
    </location>
</feature>
<feature type="region of interest" description="Disordered" evidence="3">
    <location>
        <begin position="1"/>
        <end position="35"/>
    </location>
</feature>
<feature type="region of interest" description="Required for binding to microtubules" evidence="5">
    <location>
        <begin position="91"/>
        <end position="171"/>
    </location>
</feature>
<feature type="region of interest" description="Disordered" evidence="3">
    <location>
        <begin position="114"/>
        <end position="137"/>
    </location>
</feature>
<feature type="region of interest" description="Disordered" evidence="3">
    <location>
        <begin position="167"/>
        <end position="197"/>
    </location>
</feature>
<feature type="region of interest" description="Disordered" evidence="3">
    <location>
        <begin position="260"/>
        <end position="280"/>
    </location>
</feature>
<feature type="compositionally biased region" description="Basic and acidic residues" evidence="3">
    <location>
        <begin position="114"/>
        <end position="125"/>
    </location>
</feature>
<feature type="compositionally biased region" description="Pro residues" evidence="3">
    <location>
        <begin position="174"/>
        <end position="190"/>
    </location>
</feature>
<feature type="modified residue" description="Phosphoserine" evidence="8">
    <location>
        <position position="91"/>
    </location>
</feature>
<feature type="modified residue" description="Phosphoserine" evidence="8">
    <location>
        <position position="136"/>
    </location>
</feature>
<feature type="splice variant" id="VSP_021904" description="In isoform 2." evidence="7">
    <location>
        <begin position="1"/>
        <end position="118"/>
    </location>
</feature>
<feature type="splice variant" id="VSP_021905" description="In isoform 2." evidence="7">
    <original>ERSREQGQPRPLKALWRSPKYDKVESRVKAQ</original>
    <variation>MDAKVRRAKMARVLQLEPQTSACLLSLLCPA</variation>
    <location>
        <begin position="119"/>
        <end position="149"/>
    </location>
</feature>
<sequence length="346" mass="38759">MCEGPSRISGPIPPDPTLCPDNYRRPTSAQGRLEGNALKLDLLTSDRALDTTAPRGPCIGPGAGEILERGQRGVGDVLLQLEGISLGPGASLKRKDPKDHEKENLRRIREIQKRFREQERSREQGQPRPLKALWRSPKYDKVESRVKAQLQEPGPASGTESAHFLRAHSRCGPGLPPPHVSSPQPTPPGPEAKEPGLGVDFIRHNARAAKRAPRRHSCSLQVLAQVLEQQRQAQEHYNATQKGHVPHYLLERRDLWRREAEARKQSQPDPAMPPGHTRMPENQRLETLTKLLQSQSQLLRELVLLPAGADSLRAQSHRAELDRKLVQVEEAIKIFSRPKVFVKMDD</sequence>